<protein>
    <recommendedName>
        <fullName>Probable serine/threonine-protein kinase DDB_G0286465</fullName>
        <ecNumber>2.7.11.1</ecNumber>
    </recommendedName>
</protein>
<gene>
    <name type="ORF">DDB_G0286465</name>
</gene>
<organism>
    <name type="scientific">Dictyostelium discoideum</name>
    <name type="common">Social amoeba</name>
    <dbReference type="NCBI Taxonomy" id="44689"/>
    <lineage>
        <taxon>Eukaryota</taxon>
        <taxon>Amoebozoa</taxon>
        <taxon>Evosea</taxon>
        <taxon>Eumycetozoa</taxon>
        <taxon>Dictyostelia</taxon>
        <taxon>Dictyosteliales</taxon>
        <taxon>Dictyosteliaceae</taxon>
        <taxon>Dictyostelium</taxon>
    </lineage>
</organism>
<comment type="catalytic activity">
    <reaction>
        <text>L-seryl-[protein] + ATP = O-phospho-L-seryl-[protein] + ADP + H(+)</text>
        <dbReference type="Rhea" id="RHEA:17989"/>
        <dbReference type="Rhea" id="RHEA-COMP:9863"/>
        <dbReference type="Rhea" id="RHEA-COMP:11604"/>
        <dbReference type="ChEBI" id="CHEBI:15378"/>
        <dbReference type="ChEBI" id="CHEBI:29999"/>
        <dbReference type="ChEBI" id="CHEBI:30616"/>
        <dbReference type="ChEBI" id="CHEBI:83421"/>
        <dbReference type="ChEBI" id="CHEBI:456216"/>
        <dbReference type="EC" id="2.7.11.1"/>
    </reaction>
</comment>
<comment type="catalytic activity">
    <reaction>
        <text>L-threonyl-[protein] + ATP = O-phospho-L-threonyl-[protein] + ADP + H(+)</text>
        <dbReference type="Rhea" id="RHEA:46608"/>
        <dbReference type="Rhea" id="RHEA-COMP:11060"/>
        <dbReference type="Rhea" id="RHEA-COMP:11605"/>
        <dbReference type="ChEBI" id="CHEBI:15378"/>
        <dbReference type="ChEBI" id="CHEBI:30013"/>
        <dbReference type="ChEBI" id="CHEBI:30616"/>
        <dbReference type="ChEBI" id="CHEBI:61977"/>
        <dbReference type="ChEBI" id="CHEBI:456216"/>
        <dbReference type="EC" id="2.7.11.1"/>
    </reaction>
</comment>
<comment type="similarity">
    <text evidence="1">Belongs to the protein kinase superfamily. Ser/Thr protein kinase family.</text>
</comment>
<evidence type="ECO:0000255" key="1">
    <source>
        <dbReference type="PROSITE-ProRule" id="PRU00159"/>
    </source>
</evidence>
<evidence type="ECO:0000256" key="2">
    <source>
        <dbReference type="SAM" id="MobiDB-lite"/>
    </source>
</evidence>
<keyword id="KW-0067">ATP-binding</keyword>
<keyword id="KW-0418">Kinase</keyword>
<keyword id="KW-0547">Nucleotide-binding</keyword>
<keyword id="KW-1185">Reference proteome</keyword>
<keyword id="KW-0723">Serine/threonine-protein kinase</keyword>
<keyword id="KW-0808">Transferase</keyword>
<name>Y8646_DICDI</name>
<sequence length="1221" mass="139876">MTLRLDTSLKRGASRNIPPIPTFSSVSNENLSSSPYTSSSYYSSNCESLDSIGDISIDSSVYSSSEIEFVGNGDKKKNFINNNNNNNGNKYDFSNLLETPKLKFSPSTGRTKNNNNNNNNNINNNNYKKNDNQKKNFKYIEDNESDYLDDENDEENVDIDLSILNVNFKIINENNSQNNNNNKYQINNNMQKTGGRNGSVFFVNNNNNSNNNNNNNNNNNNNNNNNNNNNNNNNNNNDNSNNKNNFKNNNTSYTHNSNKNNNENKNTFAIKQQLVSTPKNKLSQTYREKVILEHLNILIESNKACNFPKLINWYKAAPTSNLSNVNNNNSNNNNNNSNNNITNSRYGSNYEDIYDDNYYDEVDDYDSGKEEEESTKTITKTITTTTASIKPNIQYMHLILEYANMGTLKEYGKDNNFEFTISQMKSLLFQVIYSLAISQKEFEFVHNDLHFGNVLLTSFPVDKKYIVYQDKLDNGEFNNWIVGGDFIVKISDFGLSRIKLPSNEIIYNQRNDRSKEFCFYSDLYSFSSLLNKIKIKESPSSSSTTSTSTSQVLIKSDSDSSSSASSSSSSSSSSSSSSSSSLPKSKNKSNRSKDNQSKLDPEKRLLTKLKKSMKDLPPYKLLDHPFFDSLKVCPNDCLPLNSIRISTNGIVPKEFPKPLSPIFEKNNIISIPSSPISTTTTTFPTTPTIKSTTKKISKTIVIPSSPSLALPPNLSVKSPFAPPSKKQLQQYQQQQKQQTISMFKYDDEEEKEEEEKEKEKEKEKEKEKEEEGEEGNIPKEKLILKMTPKPYIFIHHFSPNSLGPLSPPSSTSSTLLGALSQEKFEKKQRQIQDSEKVNKNEEENQTKDDADNISPPLPHAIKKSIYNNKNNHQKISTNTIIKTPIKAPIKTITQIPTETPNKIPNKTISQSNPVIIRDETPQKGIPFEKKVVSTPLIYKERPHFVFLKKAKLSSNSNNKENIINFHNNNNNNNNNNNNNNNNNNNNNNNNNNNKDSYNEKGNATSYCNGDDDDDDFKIDHKENVVSGFLIEKDHEFIGDKENSKEKQKVSKRVQDKAWQELNAFLRKNPTQGVSRIKSTDYPALSDLFPKKKRCSENNFVFEKEKKQEKENKEKENKEKEKKQLEKQKQLEREKLEKDRLEKDRLEKEQQEKDCLEREKFLENERLEKEQEREKLEKEIKILVVSKKNRTNPLQKDYDRYIKKVGSSLTEKRASKPMNDNI</sequence>
<proteinExistence type="inferred from homology"/>
<reference key="1">
    <citation type="journal article" date="2005" name="Nature">
        <title>The genome of the social amoeba Dictyostelium discoideum.</title>
        <authorList>
            <person name="Eichinger L."/>
            <person name="Pachebat J.A."/>
            <person name="Gloeckner G."/>
            <person name="Rajandream M.A."/>
            <person name="Sucgang R."/>
            <person name="Berriman M."/>
            <person name="Song J."/>
            <person name="Olsen R."/>
            <person name="Szafranski K."/>
            <person name="Xu Q."/>
            <person name="Tunggal B."/>
            <person name="Kummerfeld S."/>
            <person name="Madera M."/>
            <person name="Konfortov B.A."/>
            <person name="Rivero F."/>
            <person name="Bankier A.T."/>
            <person name="Lehmann R."/>
            <person name="Hamlin N."/>
            <person name="Davies R."/>
            <person name="Gaudet P."/>
            <person name="Fey P."/>
            <person name="Pilcher K."/>
            <person name="Chen G."/>
            <person name="Saunders D."/>
            <person name="Sodergren E.J."/>
            <person name="Davis P."/>
            <person name="Kerhornou A."/>
            <person name="Nie X."/>
            <person name="Hall N."/>
            <person name="Anjard C."/>
            <person name="Hemphill L."/>
            <person name="Bason N."/>
            <person name="Farbrother P."/>
            <person name="Desany B."/>
            <person name="Just E."/>
            <person name="Morio T."/>
            <person name="Rost R."/>
            <person name="Churcher C.M."/>
            <person name="Cooper J."/>
            <person name="Haydock S."/>
            <person name="van Driessche N."/>
            <person name="Cronin A."/>
            <person name="Goodhead I."/>
            <person name="Muzny D.M."/>
            <person name="Mourier T."/>
            <person name="Pain A."/>
            <person name="Lu M."/>
            <person name="Harper D."/>
            <person name="Lindsay R."/>
            <person name="Hauser H."/>
            <person name="James K.D."/>
            <person name="Quiles M."/>
            <person name="Madan Babu M."/>
            <person name="Saito T."/>
            <person name="Buchrieser C."/>
            <person name="Wardroper A."/>
            <person name="Felder M."/>
            <person name="Thangavelu M."/>
            <person name="Johnson D."/>
            <person name="Knights A."/>
            <person name="Loulseged H."/>
            <person name="Mungall K.L."/>
            <person name="Oliver K."/>
            <person name="Price C."/>
            <person name="Quail M.A."/>
            <person name="Urushihara H."/>
            <person name="Hernandez J."/>
            <person name="Rabbinowitsch E."/>
            <person name="Steffen D."/>
            <person name="Sanders M."/>
            <person name="Ma J."/>
            <person name="Kohara Y."/>
            <person name="Sharp S."/>
            <person name="Simmonds M.N."/>
            <person name="Spiegler S."/>
            <person name="Tivey A."/>
            <person name="Sugano S."/>
            <person name="White B."/>
            <person name="Walker D."/>
            <person name="Woodward J.R."/>
            <person name="Winckler T."/>
            <person name="Tanaka Y."/>
            <person name="Shaulsky G."/>
            <person name="Schleicher M."/>
            <person name="Weinstock G.M."/>
            <person name="Rosenthal A."/>
            <person name="Cox E.C."/>
            <person name="Chisholm R.L."/>
            <person name="Gibbs R.A."/>
            <person name="Loomis W.F."/>
            <person name="Platzer M."/>
            <person name="Kay R.R."/>
            <person name="Williams J.G."/>
            <person name="Dear P.H."/>
            <person name="Noegel A.A."/>
            <person name="Barrell B.G."/>
            <person name="Kuspa A."/>
        </authorList>
    </citation>
    <scope>NUCLEOTIDE SEQUENCE [LARGE SCALE GENOMIC DNA]</scope>
    <source>
        <strain>AX4</strain>
    </source>
</reference>
<feature type="chain" id="PRO_0000362066" description="Probable serine/threonine-protein kinase DDB_G0286465">
    <location>
        <begin position="1"/>
        <end position="1221"/>
    </location>
</feature>
<feature type="domain" description="Protein kinase" evidence="1">
    <location>
        <begin position="186"/>
        <end position="627"/>
    </location>
</feature>
<feature type="region of interest" description="Disordered" evidence="2">
    <location>
        <begin position="1"/>
        <end position="37"/>
    </location>
</feature>
<feature type="region of interest" description="Disordered" evidence="2">
    <location>
        <begin position="104"/>
        <end position="133"/>
    </location>
</feature>
<feature type="region of interest" description="Disordered" evidence="2">
    <location>
        <begin position="173"/>
        <end position="263"/>
    </location>
</feature>
<feature type="region of interest" description="Disordered" evidence="2">
    <location>
        <begin position="324"/>
        <end position="346"/>
    </location>
</feature>
<feature type="region of interest" description="Disordered" evidence="2">
    <location>
        <begin position="538"/>
        <end position="604"/>
    </location>
</feature>
<feature type="region of interest" description="Disordered" evidence="2">
    <location>
        <begin position="712"/>
        <end position="782"/>
    </location>
</feature>
<feature type="region of interest" description="Disordered" evidence="2">
    <location>
        <begin position="823"/>
        <end position="858"/>
    </location>
</feature>
<feature type="region of interest" description="Disordered" evidence="2">
    <location>
        <begin position="959"/>
        <end position="1008"/>
    </location>
</feature>
<feature type="region of interest" description="Disordered" evidence="2">
    <location>
        <begin position="1105"/>
        <end position="1152"/>
    </location>
</feature>
<feature type="compositionally biased region" description="Low complexity" evidence="2">
    <location>
        <begin position="24"/>
        <end position="37"/>
    </location>
</feature>
<feature type="compositionally biased region" description="Low complexity" evidence="2">
    <location>
        <begin position="112"/>
        <end position="127"/>
    </location>
</feature>
<feature type="compositionally biased region" description="Low complexity" evidence="2">
    <location>
        <begin position="173"/>
        <end position="192"/>
    </location>
</feature>
<feature type="compositionally biased region" description="Low complexity" evidence="2">
    <location>
        <begin position="204"/>
        <end position="263"/>
    </location>
</feature>
<feature type="compositionally biased region" description="Low complexity" evidence="2">
    <location>
        <begin position="324"/>
        <end position="344"/>
    </location>
</feature>
<feature type="compositionally biased region" description="Low complexity" evidence="2">
    <location>
        <begin position="538"/>
        <end position="550"/>
    </location>
</feature>
<feature type="compositionally biased region" description="Low complexity" evidence="2">
    <location>
        <begin position="559"/>
        <end position="584"/>
    </location>
</feature>
<feature type="compositionally biased region" description="Basic and acidic residues" evidence="2">
    <location>
        <begin position="591"/>
        <end position="604"/>
    </location>
</feature>
<feature type="compositionally biased region" description="Low complexity" evidence="2">
    <location>
        <begin position="725"/>
        <end position="738"/>
    </location>
</feature>
<feature type="compositionally biased region" description="Acidic residues" evidence="2">
    <location>
        <begin position="746"/>
        <end position="756"/>
    </location>
</feature>
<feature type="compositionally biased region" description="Basic and acidic residues" evidence="2">
    <location>
        <begin position="757"/>
        <end position="769"/>
    </location>
</feature>
<feature type="compositionally biased region" description="Basic and acidic residues" evidence="2">
    <location>
        <begin position="823"/>
        <end position="850"/>
    </location>
</feature>
<feature type="compositionally biased region" description="Low complexity" evidence="2">
    <location>
        <begin position="959"/>
        <end position="993"/>
    </location>
</feature>
<feature type="active site" description="Proton acceptor" evidence="1">
    <location>
        <position position="448"/>
    </location>
</feature>
<feature type="binding site" evidence="1">
    <location>
        <begin position="192"/>
        <end position="200"/>
    </location>
    <ligand>
        <name>ATP</name>
        <dbReference type="ChEBI" id="CHEBI:30616"/>
    </ligand>
</feature>
<feature type="binding site" evidence="1">
    <location>
        <position position="271"/>
    </location>
    <ligand>
        <name>ATP</name>
        <dbReference type="ChEBI" id="CHEBI:30616"/>
    </ligand>
</feature>
<dbReference type="EC" id="2.7.11.1"/>
<dbReference type="EMBL" id="AAFI02000085">
    <property type="protein sequence ID" value="EAL64257.1"/>
    <property type="molecule type" value="Genomic_DNA"/>
</dbReference>
<dbReference type="RefSeq" id="XP_637732.1">
    <property type="nucleotide sequence ID" value="XM_632640.1"/>
</dbReference>
<dbReference type="STRING" id="44689.Q54LU8"/>
<dbReference type="PaxDb" id="44689-DDB0231182"/>
<dbReference type="EnsemblProtists" id="EAL64257">
    <property type="protein sequence ID" value="EAL64257"/>
    <property type="gene ID" value="DDB_G0286465"/>
</dbReference>
<dbReference type="GeneID" id="8625597"/>
<dbReference type="KEGG" id="ddi:DDB_G0286465"/>
<dbReference type="dictyBase" id="DDB_G0286465"/>
<dbReference type="VEuPathDB" id="AmoebaDB:DDB_G0286465"/>
<dbReference type="eggNOG" id="ENOG502SF4Y">
    <property type="taxonomic scope" value="Eukaryota"/>
</dbReference>
<dbReference type="HOGENOM" id="CLU_268677_0_0_1"/>
<dbReference type="InParanoid" id="Q54LU8"/>
<dbReference type="Reactome" id="R-DDI-9020702">
    <property type="pathway name" value="Interleukin-1 signaling"/>
</dbReference>
<dbReference type="PRO" id="PR:Q54LU8"/>
<dbReference type="Proteomes" id="UP000002195">
    <property type="component" value="Chromosome 4"/>
</dbReference>
<dbReference type="GO" id="GO:0005737">
    <property type="term" value="C:cytoplasm"/>
    <property type="evidence" value="ECO:0000318"/>
    <property type="project" value="GO_Central"/>
</dbReference>
<dbReference type="GO" id="GO:0005634">
    <property type="term" value="C:nucleus"/>
    <property type="evidence" value="ECO:0000318"/>
    <property type="project" value="GO_Central"/>
</dbReference>
<dbReference type="GO" id="GO:0005524">
    <property type="term" value="F:ATP binding"/>
    <property type="evidence" value="ECO:0007669"/>
    <property type="project" value="UniProtKB-KW"/>
</dbReference>
<dbReference type="GO" id="GO:0072354">
    <property type="term" value="F:histone H3T3 kinase activity"/>
    <property type="evidence" value="ECO:0000318"/>
    <property type="project" value="GO_Central"/>
</dbReference>
<dbReference type="GO" id="GO:0106310">
    <property type="term" value="F:protein serine kinase activity"/>
    <property type="evidence" value="ECO:0007669"/>
    <property type="project" value="RHEA"/>
</dbReference>
<dbReference type="GO" id="GO:0035556">
    <property type="term" value="P:intracellular signal transduction"/>
    <property type="evidence" value="ECO:0000318"/>
    <property type="project" value="GO_Central"/>
</dbReference>
<dbReference type="GO" id="GO:0000278">
    <property type="term" value="P:mitotic cell cycle"/>
    <property type="evidence" value="ECO:0000318"/>
    <property type="project" value="GO_Central"/>
</dbReference>
<dbReference type="Gene3D" id="1.10.510.10">
    <property type="entry name" value="Transferase(Phosphotransferase) domain 1"/>
    <property type="match status" value="1"/>
</dbReference>
<dbReference type="InterPro" id="IPR011009">
    <property type="entry name" value="Kinase-like_dom_sf"/>
</dbReference>
<dbReference type="InterPro" id="IPR000719">
    <property type="entry name" value="Prot_kinase_dom"/>
</dbReference>
<dbReference type="InterPro" id="IPR001245">
    <property type="entry name" value="Ser-Thr/Tyr_kinase_cat_dom"/>
</dbReference>
<dbReference type="PANTHER" id="PTHR24419">
    <property type="entry name" value="INTERLEUKIN-1 RECEPTOR-ASSOCIATED KINASE"/>
    <property type="match status" value="1"/>
</dbReference>
<dbReference type="PANTHER" id="PTHR24419:SF18">
    <property type="entry name" value="SERINE_THREONINE-PROTEIN KINASE HASPIN"/>
    <property type="match status" value="1"/>
</dbReference>
<dbReference type="Pfam" id="PF07714">
    <property type="entry name" value="PK_Tyr_Ser-Thr"/>
    <property type="match status" value="1"/>
</dbReference>
<dbReference type="SMART" id="SM00220">
    <property type="entry name" value="S_TKc"/>
    <property type="match status" value="1"/>
</dbReference>
<dbReference type="SUPFAM" id="SSF56112">
    <property type="entry name" value="Protein kinase-like (PK-like)"/>
    <property type="match status" value="1"/>
</dbReference>
<dbReference type="PROSITE" id="PS50011">
    <property type="entry name" value="PROTEIN_KINASE_DOM"/>
    <property type="match status" value="1"/>
</dbReference>
<accession>Q54LU8</accession>